<dbReference type="EMBL" id="CH476601">
    <property type="protein sequence ID" value="EAU33764.1"/>
    <property type="molecule type" value="Genomic_DNA"/>
</dbReference>
<dbReference type="RefSeq" id="XP_001215181.1">
    <property type="nucleotide sequence ID" value="XM_001215181.1"/>
</dbReference>
<dbReference type="SMR" id="Q0CJY1"/>
<dbReference type="STRING" id="341663.Q0CJY1"/>
<dbReference type="EnsemblFungi" id="EAU33764">
    <property type="protein sequence ID" value="EAU33764"/>
    <property type="gene ID" value="ATEG_06003"/>
</dbReference>
<dbReference type="GeneID" id="4321578"/>
<dbReference type="VEuPathDB" id="FungiDB:ATEG_06003"/>
<dbReference type="eggNOG" id="KOG0997">
    <property type="taxonomic scope" value="Eukaryota"/>
</dbReference>
<dbReference type="HOGENOM" id="CLU_014574_5_0_1"/>
<dbReference type="OMA" id="EYSAKEP"/>
<dbReference type="OrthoDB" id="272411at2759"/>
<dbReference type="Proteomes" id="UP000007963">
    <property type="component" value="Unassembled WGS sequence"/>
</dbReference>
<dbReference type="GO" id="GO:0000329">
    <property type="term" value="C:fungal-type vacuole membrane"/>
    <property type="evidence" value="ECO:0007669"/>
    <property type="project" value="TreeGrafter"/>
</dbReference>
<dbReference type="GO" id="GO:0035658">
    <property type="term" value="C:Mon1-Ccz1 complex"/>
    <property type="evidence" value="ECO:0007669"/>
    <property type="project" value="TreeGrafter"/>
</dbReference>
<dbReference type="GO" id="GO:0032585">
    <property type="term" value="C:multivesicular body membrane"/>
    <property type="evidence" value="ECO:0007669"/>
    <property type="project" value="UniProtKB-SubCell"/>
</dbReference>
<dbReference type="GO" id="GO:0006914">
    <property type="term" value="P:autophagy"/>
    <property type="evidence" value="ECO:0007669"/>
    <property type="project" value="UniProtKB-KW"/>
</dbReference>
<dbReference type="GO" id="GO:0006623">
    <property type="term" value="P:protein targeting to vacuole"/>
    <property type="evidence" value="ECO:0007669"/>
    <property type="project" value="InterPro"/>
</dbReference>
<dbReference type="GO" id="GO:0016192">
    <property type="term" value="P:vesicle-mediated transport"/>
    <property type="evidence" value="ECO:0007669"/>
    <property type="project" value="InterPro"/>
</dbReference>
<dbReference type="InterPro" id="IPR043972">
    <property type="entry name" value="FUZ/MON1/HPS1_longin_1"/>
</dbReference>
<dbReference type="InterPro" id="IPR043971">
    <property type="entry name" value="FUZ/MON1/HPS1_longin_2"/>
</dbReference>
<dbReference type="InterPro" id="IPR043970">
    <property type="entry name" value="FUZ/MON1/HPS1_longin_3"/>
</dbReference>
<dbReference type="InterPro" id="IPR004353">
    <property type="entry name" value="Mon1"/>
</dbReference>
<dbReference type="PANTHER" id="PTHR13027">
    <property type="entry name" value="SAND PROTEIN-RELATED"/>
    <property type="match status" value="1"/>
</dbReference>
<dbReference type="PANTHER" id="PTHR13027:SF7">
    <property type="entry name" value="VACUOLAR FUSION PROTEIN MON1 HOMOLOG"/>
    <property type="match status" value="1"/>
</dbReference>
<dbReference type="Pfam" id="PF19036">
    <property type="entry name" value="Fuz_longin_1"/>
    <property type="match status" value="1"/>
</dbReference>
<dbReference type="Pfam" id="PF19037">
    <property type="entry name" value="Fuz_longin_2"/>
    <property type="match status" value="1"/>
</dbReference>
<dbReference type="Pfam" id="PF19038">
    <property type="entry name" value="Fuz_longin_3"/>
    <property type="match status" value="1"/>
</dbReference>
<dbReference type="PRINTS" id="PR01546">
    <property type="entry name" value="YEAST73DUF"/>
</dbReference>
<comment type="function">
    <text evidence="2">In complex with CCZ1, is required for multiple vacuole delivery pathways including the cytoplasm to vacuole transport (Cvt), autophagy, pexophagy and endocytosis. The MON1-CCZ1 complex acts at the fusion of vesicles with the vacuole, through its regulation of the SNARE complex during the coordinated priming and docking stages of fusion, and particularly at the stage of tethering/docking.</text>
</comment>
<comment type="subcellular location">
    <subcellularLocation>
        <location evidence="1">Endosome</location>
        <location evidence="1">Multivesicular body membrane</location>
        <topology evidence="1">Peripheral membrane protein</topology>
    </subcellularLocation>
    <subcellularLocation>
        <location evidence="1">Prevacuolar compartment membrane</location>
        <topology evidence="1">Peripheral membrane protein</topology>
    </subcellularLocation>
    <subcellularLocation>
        <location evidence="1">Vacuole membrane</location>
        <topology evidence="1">Peripheral membrane protein</topology>
    </subcellularLocation>
</comment>
<comment type="similarity">
    <text evidence="4">Belongs to the MON1/SAND family.</text>
</comment>
<organism>
    <name type="scientific">Aspergillus terreus (strain NIH 2624 / FGSC A1156)</name>
    <dbReference type="NCBI Taxonomy" id="341663"/>
    <lineage>
        <taxon>Eukaryota</taxon>
        <taxon>Fungi</taxon>
        <taxon>Dikarya</taxon>
        <taxon>Ascomycota</taxon>
        <taxon>Pezizomycotina</taxon>
        <taxon>Eurotiomycetes</taxon>
        <taxon>Eurotiomycetidae</taxon>
        <taxon>Eurotiales</taxon>
        <taxon>Aspergillaceae</taxon>
        <taxon>Aspergillus</taxon>
        <taxon>Aspergillus subgen. Circumdati</taxon>
    </lineage>
</organism>
<feature type="chain" id="PRO_0000278855" description="Vacuolar fusion protein mon1">
    <location>
        <begin position="1"/>
        <end position="556"/>
    </location>
</feature>
<feature type="region of interest" description="Disordered" evidence="3">
    <location>
        <begin position="1"/>
        <end position="80"/>
    </location>
</feature>
<feature type="compositionally biased region" description="Polar residues" evidence="3">
    <location>
        <begin position="1"/>
        <end position="13"/>
    </location>
</feature>
<feature type="compositionally biased region" description="Polar residues" evidence="3">
    <location>
        <begin position="24"/>
        <end position="45"/>
    </location>
</feature>
<feature type="compositionally biased region" description="Pro residues" evidence="3">
    <location>
        <begin position="47"/>
        <end position="56"/>
    </location>
</feature>
<feature type="compositionally biased region" description="Polar residues" evidence="3">
    <location>
        <begin position="68"/>
        <end position="80"/>
    </location>
</feature>
<name>MON1_ASPTN</name>
<protein>
    <recommendedName>
        <fullName>Vacuolar fusion protein mon1</fullName>
    </recommendedName>
</protein>
<keyword id="KW-0072">Autophagy</keyword>
<keyword id="KW-0967">Endosome</keyword>
<keyword id="KW-0472">Membrane</keyword>
<keyword id="KW-0653">Protein transport</keyword>
<keyword id="KW-1185">Reference proteome</keyword>
<keyword id="KW-0813">Transport</keyword>
<keyword id="KW-0926">Vacuole</keyword>
<reference key="1">
    <citation type="submission" date="2005-09" db="EMBL/GenBank/DDBJ databases">
        <title>Annotation of the Aspergillus terreus NIH2624 genome.</title>
        <authorList>
            <person name="Birren B.W."/>
            <person name="Lander E.S."/>
            <person name="Galagan J.E."/>
            <person name="Nusbaum C."/>
            <person name="Devon K."/>
            <person name="Henn M."/>
            <person name="Ma L.-J."/>
            <person name="Jaffe D.B."/>
            <person name="Butler J."/>
            <person name="Alvarez P."/>
            <person name="Gnerre S."/>
            <person name="Grabherr M."/>
            <person name="Kleber M."/>
            <person name="Mauceli E.W."/>
            <person name="Brockman W."/>
            <person name="Rounsley S."/>
            <person name="Young S.K."/>
            <person name="LaButti K."/>
            <person name="Pushparaj V."/>
            <person name="DeCaprio D."/>
            <person name="Crawford M."/>
            <person name="Koehrsen M."/>
            <person name="Engels R."/>
            <person name="Montgomery P."/>
            <person name="Pearson M."/>
            <person name="Howarth C."/>
            <person name="Larson L."/>
            <person name="Luoma S."/>
            <person name="White J."/>
            <person name="Alvarado L."/>
            <person name="Kodira C.D."/>
            <person name="Zeng Q."/>
            <person name="Oleary S."/>
            <person name="Yandava C."/>
            <person name="Denning D.W."/>
            <person name="Nierman W.C."/>
            <person name="Milne T."/>
            <person name="Madden K."/>
        </authorList>
    </citation>
    <scope>NUCLEOTIDE SEQUENCE [LARGE SCALE GENOMIC DNA]</scope>
    <source>
        <strain>NIH 2624 / FGSC A1156</strain>
    </source>
</reference>
<gene>
    <name type="primary">mon1</name>
    <name type="ORF">ATEG_06003</name>
</gene>
<accession>Q0CJY1</accession>
<evidence type="ECO:0000250" key="1"/>
<evidence type="ECO:0000250" key="2">
    <source>
        <dbReference type="UniProtKB" id="P53129"/>
    </source>
</evidence>
<evidence type="ECO:0000256" key="3">
    <source>
        <dbReference type="SAM" id="MobiDB-lite"/>
    </source>
</evidence>
<evidence type="ECO:0000305" key="4"/>
<sequence>MDLTDQSRPQTASGDDPDGRVENAPSSSTTTASVGTNDRTETANPEEQPPPLPPRPNTLSLLDEGGASSRSLRQTGPVNLQSKATTAVTIPDIASNDAGKENYNLRGLAGALRAKASLSHLASSRASEAGDSASVRSSVPHTEAGEMENVFGDLLAAESGVVQQDGTGLLQFPEFQADDVEDDFACEFEPVGEVEEGEDNEEMVLEKWKSKRKHYLILSAAGKPIWTRHGDGALISTYVGIIQTIISFFQDSDDHLRSFTAGDTKFVVVTKGPLYFVAISRIHESETQLKLQLEALYMQILSTLTLPSLTHLFSVRPSTDLKRPLQGSETLLSTLADSFTRGSPSTLLSALECLKIRKAHRHIINNTLLKSRVNSLLYGLVVAGGRLVSVVRPKKHSLHPGDLQLLFSMIFEAEAVKTGGGESWIPVCLPGFNSSGYLYMYVSFLDLREDSSNVADDSTTKEESVAIVLISTDKESFFELQEMRNNLVEQLQKNYSLQVIKEAIDRGRPATTDIVPGTVLHHFLYKSRANVQFTMSSYDPEFSSISRRRRSVSLSS</sequence>
<proteinExistence type="inferred from homology"/>